<dbReference type="EC" id="5.3.1.1" evidence="1"/>
<dbReference type="EMBL" id="AE015925">
    <property type="protein sequence ID" value="AAP05057.1"/>
    <property type="molecule type" value="Genomic_DNA"/>
</dbReference>
<dbReference type="RefSeq" id="WP_011006275.1">
    <property type="nucleotide sequence ID" value="NC_003361.3"/>
</dbReference>
<dbReference type="SMR" id="Q823U7"/>
<dbReference type="STRING" id="227941.CCA_00308"/>
<dbReference type="KEGG" id="cca:CCA_00308"/>
<dbReference type="eggNOG" id="COG0149">
    <property type="taxonomic scope" value="Bacteria"/>
</dbReference>
<dbReference type="HOGENOM" id="CLU_024251_2_3_0"/>
<dbReference type="OrthoDB" id="9809429at2"/>
<dbReference type="UniPathway" id="UPA00109">
    <property type="reaction ID" value="UER00189"/>
</dbReference>
<dbReference type="UniPathway" id="UPA00138"/>
<dbReference type="Proteomes" id="UP000002193">
    <property type="component" value="Chromosome"/>
</dbReference>
<dbReference type="GO" id="GO:0005829">
    <property type="term" value="C:cytosol"/>
    <property type="evidence" value="ECO:0007669"/>
    <property type="project" value="TreeGrafter"/>
</dbReference>
<dbReference type="GO" id="GO:0004807">
    <property type="term" value="F:triose-phosphate isomerase activity"/>
    <property type="evidence" value="ECO:0007669"/>
    <property type="project" value="UniProtKB-UniRule"/>
</dbReference>
<dbReference type="GO" id="GO:0006094">
    <property type="term" value="P:gluconeogenesis"/>
    <property type="evidence" value="ECO:0007669"/>
    <property type="project" value="UniProtKB-UniRule"/>
</dbReference>
<dbReference type="GO" id="GO:0046166">
    <property type="term" value="P:glyceraldehyde-3-phosphate biosynthetic process"/>
    <property type="evidence" value="ECO:0007669"/>
    <property type="project" value="TreeGrafter"/>
</dbReference>
<dbReference type="GO" id="GO:0019563">
    <property type="term" value="P:glycerol catabolic process"/>
    <property type="evidence" value="ECO:0007669"/>
    <property type="project" value="TreeGrafter"/>
</dbReference>
<dbReference type="GO" id="GO:0006096">
    <property type="term" value="P:glycolytic process"/>
    <property type="evidence" value="ECO:0007669"/>
    <property type="project" value="UniProtKB-UniRule"/>
</dbReference>
<dbReference type="CDD" id="cd00311">
    <property type="entry name" value="TIM"/>
    <property type="match status" value="1"/>
</dbReference>
<dbReference type="FunFam" id="3.20.20.70:FF:000016">
    <property type="entry name" value="Triosephosphate isomerase"/>
    <property type="match status" value="1"/>
</dbReference>
<dbReference type="Gene3D" id="3.20.20.70">
    <property type="entry name" value="Aldolase class I"/>
    <property type="match status" value="1"/>
</dbReference>
<dbReference type="HAMAP" id="MF_00147_B">
    <property type="entry name" value="TIM_B"/>
    <property type="match status" value="1"/>
</dbReference>
<dbReference type="InterPro" id="IPR013785">
    <property type="entry name" value="Aldolase_TIM"/>
</dbReference>
<dbReference type="InterPro" id="IPR035990">
    <property type="entry name" value="TIM_sf"/>
</dbReference>
<dbReference type="InterPro" id="IPR022896">
    <property type="entry name" value="TrioseP_Isoase_bac/euk"/>
</dbReference>
<dbReference type="InterPro" id="IPR000652">
    <property type="entry name" value="Triosephosphate_isomerase"/>
</dbReference>
<dbReference type="InterPro" id="IPR020861">
    <property type="entry name" value="Triosephosphate_isomerase_AS"/>
</dbReference>
<dbReference type="NCBIfam" id="TIGR00419">
    <property type="entry name" value="tim"/>
    <property type="match status" value="1"/>
</dbReference>
<dbReference type="PANTHER" id="PTHR21139">
    <property type="entry name" value="TRIOSEPHOSPHATE ISOMERASE"/>
    <property type="match status" value="1"/>
</dbReference>
<dbReference type="PANTHER" id="PTHR21139:SF42">
    <property type="entry name" value="TRIOSEPHOSPHATE ISOMERASE"/>
    <property type="match status" value="1"/>
</dbReference>
<dbReference type="Pfam" id="PF00121">
    <property type="entry name" value="TIM"/>
    <property type="match status" value="1"/>
</dbReference>
<dbReference type="SUPFAM" id="SSF51351">
    <property type="entry name" value="Triosephosphate isomerase (TIM)"/>
    <property type="match status" value="1"/>
</dbReference>
<dbReference type="PROSITE" id="PS00171">
    <property type="entry name" value="TIM_1"/>
    <property type="match status" value="1"/>
</dbReference>
<dbReference type="PROSITE" id="PS51440">
    <property type="entry name" value="TIM_2"/>
    <property type="match status" value="1"/>
</dbReference>
<evidence type="ECO:0000255" key="1">
    <source>
        <dbReference type="HAMAP-Rule" id="MF_00147"/>
    </source>
</evidence>
<sequence>MERKSYVFGNWKMHKTAKEAKDFLSIFCPFVKEISPASLVGIAPAFTTLSACCESIKEMDSSIWLGAQNVHQDSSGAFTGEVSLPMLQEFHVNFVLLGHSECRHIFHEEDATIALKVGAAARSGVVPVLCIGETLEARENGTTKEVLSNQLMLGLAQLPETAPVIIAYEPVWAIGTGKVASTADVQEVHAFCREVLSRIFSKEKSEIISILYGGSVKADNAEGFARCPDVDGLLVGGASLDPQGFANVLRNFNL</sequence>
<gene>
    <name evidence="1" type="primary">tpiA</name>
    <name type="ordered locus">CCA_00308</name>
</gene>
<keyword id="KW-0963">Cytoplasm</keyword>
<keyword id="KW-0312">Gluconeogenesis</keyword>
<keyword id="KW-0324">Glycolysis</keyword>
<keyword id="KW-0413">Isomerase</keyword>
<comment type="function">
    <text evidence="1">Involved in the gluconeogenesis. Catalyzes stereospecifically the conversion of dihydroxyacetone phosphate (DHAP) to D-glyceraldehyde-3-phosphate (G3P).</text>
</comment>
<comment type="catalytic activity">
    <reaction evidence="1">
        <text>D-glyceraldehyde 3-phosphate = dihydroxyacetone phosphate</text>
        <dbReference type="Rhea" id="RHEA:18585"/>
        <dbReference type="ChEBI" id="CHEBI:57642"/>
        <dbReference type="ChEBI" id="CHEBI:59776"/>
        <dbReference type="EC" id="5.3.1.1"/>
    </reaction>
</comment>
<comment type="pathway">
    <text evidence="1">Carbohydrate biosynthesis; gluconeogenesis.</text>
</comment>
<comment type="pathway">
    <text evidence="1">Carbohydrate degradation; glycolysis; D-glyceraldehyde 3-phosphate from glycerone phosphate: step 1/1.</text>
</comment>
<comment type="subunit">
    <text evidence="1">Homodimer.</text>
</comment>
<comment type="subcellular location">
    <subcellularLocation>
        <location evidence="1">Cytoplasm</location>
    </subcellularLocation>
</comment>
<comment type="similarity">
    <text evidence="1">Belongs to the triosephosphate isomerase family.</text>
</comment>
<feature type="chain" id="PRO_0000090203" description="Triosephosphate isomerase">
    <location>
        <begin position="1"/>
        <end position="254"/>
    </location>
</feature>
<feature type="active site" description="Electrophile" evidence="1">
    <location>
        <position position="99"/>
    </location>
</feature>
<feature type="active site" description="Proton acceptor" evidence="1">
    <location>
        <position position="169"/>
    </location>
</feature>
<feature type="binding site" evidence="1">
    <location>
        <begin position="10"/>
        <end position="12"/>
    </location>
    <ligand>
        <name>substrate</name>
    </ligand>
</feature>
<feature type="binding site" evidence="1">
    <location>
        <position position="175"/>
    </location>
    <ligand>
        <name>substrate</name>
    </ligand>
</feature>
<feature type="binding site" evidence="1">
    <location>
        <position position="215"/>
    </location>
    <ligand>
        <name>substrate</name>
    </ligand>
</feature>
<feature type="binding site" evidence="1">
    <location>
        <begin position="236"/>
        <end position="237"/>
    </location>
    <ligand>
        <name>substrate</name>
    </ligand>
</feature>
<protein>
    <recommendedName>
        <fullName evidence="1">Triosephosphate isomerase</fullName>
        <shortName evidence="1">TIM</shortName>
        <shortName evidence="1">TPI</shortName>
        <ecNumber evidence="1">5.3.1.1</ecNumber>
    </recommendedName>
    <alternativeName>
        <fullName evidence="1">Triose-phosphate isomerase</fullName>
    </alternativeName>
</protein>
<accession>Q823U7</accession>
<proteinExistence type="inferred from homology"/>
<name>TPIS_CHLCV</name>
<organism>
    <name type="scientific">Chlamydia caviae (strain ATCC VR-813 / DSM 19441 / 03DC25 / GPIC)</name>
    <name type="common">Chlamydophila caviae</name>
    <dbReference type="NCBI Taxonomy" id="227941"/>
    <lineage>
        <taxon>Bacteria</taxon>
        <taxon>Pseudomonadati</taxon>
        <taxon>Chlamydiota</taxon>
        <taxon>Chlamydiia</taxon>
        <taxon>Chlamydiales</taxon>
        <taxon>Chlamydiaceae</taxon>
        <taxon>Chlamydia/Chlamydophila group</taxon>
        <taxon>Chlamydia</taxon>
    </lineage>
</organism>
<reference key="1">
    <citation type="journal article" date="2003" name="Nucleic Acids Res.">
        <title>Genome sequence of Chlamydophila caviae (Chlamydia psittaci GPIC): examining the role of niche-specific genes in the evolution of the Chlamydiaceae.</title>
        <authorList>
            <person name="Read T.D."/>
            <person name="Myers G.S.A."/>
            <person name="Brunham R.C."/>
            <person name="Nelson W.C."/>
            <person name="Paulsen I.T."/>
            <person name="Heidelberg J.F."/>
            <person name="Holtzapple E.K."/>
            <person name="Khouri H.M."/>
            <person name="Federova N.B."/>
            <person name="Carty H.A."/>
            <person name="Umayam L.A."/>
            <person name="Haft D.H."/>
            <person name="Peterson J.D."/>
            <person name="Beanan M.J."/>
            <person name="White O."/>
            <person name="Salzberg S.L."/>
            <person name="Hsia R.-C."/>
            <person name="McClarty G."/>
            <person name="Rank R.G."/>
            <person name="Bavoil P.M."/>
            <person name="Fraser C.M."/>
        </authorList>
    </citation>
    <scope>NUCLEOTIDE SEQUENCE [LARGE SCALE GENOMIC DNA]</scope>
    <source>
        <strain>ATCC VR-813 / DSM 19441 / 03DC25 / GPIC</strain>
    </source>
</reference>